<feature type="chain" id="PRO_0000211248" description="Paramyosin">
    <location>
        <begin position="1" status="less than"/>
        <end position="848" status="greater than"/>
    </location>
</feature>
<feature type="region of interest" description="Nonhelical region" evidence="2">
    <location>
        <begin position="1" status="less than"/>
        <end position="9"/>
    </location>
</feature>
<feature type="region of interest" description="Nonhelical region" evidence="2">
    <location>
        <begin position="834"/>
        <end position="848"/>
    </location>
</feature>
<feature type="coiled-coil region" evidence="2">
    <location>
        <begin position="10"/>
        <end position="833"/>
    </location>
</feature>
<feature type="disulfide bond" description="Interchain" evidence="2">
    <location>
        <position position="105"/>
    </location>
</feature>
<feature type="disulfide bond" description="Interchain" evidence="2">
    <location>
        <position position="594"/>
    </location>
</feature>
<feature type="non-terminal residue">
    <location>
        <position position="1"/>
    </location>
</feature>
<feature type="non-terminal residue">
    <location>
        <position position="848"/>
    </location>
</feature>
<comment type="function">
    <text>Paramyosin is a major structural component of many thick filaments isolated from invertebrate muscles.</text>
</comment>
<comment type="subunit">
    <text evidence="1">Homodimer.</text>
</comment>
<comment type="subcellular location">
    <subcellularLocation>
        <location>Cytoplasm</location>
        <location>Myofibril</location>
    </subcellularLocation>
    <text>Thick filaments of the myofibrils.</text>
</comment>
<comment type="similarity">
    <text evidence="3">Belongs to the paramyosin family.</text>
</comment>
<sequence length="848" mass="98008">AFGSMSVADLGSLTRLEDKIRLLQEDLESERELRNRIERERADLSVQLIALTDRLEDAEGTTDSQIESNRKREAELQKLRKLLEESQLENEDAMNVLRKKHQDACLDYAEQIEQLQKKNSKIDRERQRLQHEVIELTATIDQLQKDKHLAEKAAERFEAQTIELSNKVEDLNRHVNDLAQQRQRLQAENNDLLKEIHDQKVQLDNLQHVKYQLAQQLEEARRRLEDAERERSQLQAQLHQVQLELDSVRTALDEESAARAEAEHKLALANTEITQWKSKFDAEVALHHEEVEDLRKKMLQKQAEYEEQIEIMLQKISQLEKAKSRLQSEVEVLIVDLEKAQNTIAILERAKEQLEKTVNELKVRIDELTVELEAAQREARAALAELQKMKNLYEKAIEQKEALARENKKLQDDLHEAKEALADANRKLHELDLENARLAGEIRELQTALKESEAARRDAENRAQRALAELQQLRIEMERRLQEKEEEMEALRKNMQFEIDRLTAALADAEARMKAEISRLKKKYQAEIAELEMTVDNLNRANIEAQKTIKKQSEQLKILQASLEDTQRQLQQTLDQYALAQRKVSALSAELEECKVALDNAIRARKQAEIDLEEANARITDLVSINNNLTAIKNKLETELSTAQADLDEATKELHAADERANRALADAARAVEQLHEEQEHSMKIDALRKSLEEQVKQLQVQIQEAEAAALLGGKRVIAKLETRIRDLETALDEETRRHKETQGALRKKDRRIKEVQMQVDEEHKMFVMAQDTADRLLEKLNIQKWQLGEAESLTMANLQRVRRYQRELEDAEGRADQAESSLHLIRAKHRSSVVTGKNASASKIYVL</sequence>
<protein>
    <recommendedName>
        <fullName>Paramyosin</fullName>
    </recommendedName>
</protein>
<reference key="1">
    <citation type="journal article" date="1990" name="Mol. Biochem. Parasitol.">
        <title>Filarial paramyosin: cDNA sequences from Dirofilaria immitis and Onchocerca volvulus.</title>
        <authorList>
            <person name="Limberger R.J."/>
            <person name="McReynolds L.A."/>
        </authorList>
    </citation>
    <scope>NUCLEOTIDE SEQUENCE [MRNA]</scope>
</reference>
<reference key="2">
    <citation type="journal article" date="1989" name="Mol. Biochem. Parasitol.">
        <title>A lambda gt11 cDNA recombinant that encodes Dirofilaria immitis paramyosin.</title>
        <authorList>
            <person name="Grandea A.G. III"/>
            <person name="Tuyen L.K."/>
            <person name="Asikin N."/>
            <person name="Davis T.B."/>
            <person name="Philipp M."/>
            <person name="Cohen C."/>
            <person name="McReynolds L.A."/>
        </authorList>
    </citation>
    <scope>NUCLEOTIDE SEQUENCE [MRNA] OF 18-96</scope>
</reference>
<proteinExistence type="evidence at transcript level"/>
<name>MYSP_DIRIM</name>
<dbReference type="EMBL" id="M29733">
    <property type="protein sequence ID" value="AAA28299.1"/>
    <property type="molecule type" value="mRNA"/>
</dbReference>
<dbReference type="EMBL" id="J04009">
    <property type="protein sequence ID" value="AAA28300.1"/>
    <property type="molecule type" value="mRNA"/>
</dbReference>
<dbReference type="PIR" id="A44972">
    <property type="entry name" value="A44972"/>
</dbReference>
<dbReference type="PIR" id="A45548">
    <property type="entry name" value="A45548"/>
</dbReference>
<dbReference type="SMR" id="P13392"/>
<dbReference type="GO" id="GO:0030016">
    <property type="term" value="C:myofibril"/>
    <property type="evidence" value="ECO:0007669"/>
    <property type="project" value="UniProtKB-SubCell"/>
</dbReference>
<dbReference type="GO" id="GO:0016459">
    <property type="term" value="C:myosin complex"/>
    <property type="evidence" value="ECO:0007669"/>
    <property type="project" value="UniProtKB-KW"/>
</dbReference>
<dbReference type="GO" id="GO:0032982">
    <property type="term" value="C:myosin filament"/>
    <property type="evidence" value="ECO:0007669"/>
    <property type="project" value="UniProtKB-KW"/>
</dbReference>
<dbReference type="FunFam" id="1.20.5.370:FF:000001">
    <property type="entry name" value="Myosin heavy chain"/>
    <property type="match status" value="1"/>
</dbReference>
<dbReference type="FunFam" id="1.20.5.340:FF:000035">
    <property type="entry name" value="Paramyosin, long form"/>
    <property type="match status" value="1"/>
</dbReference>
<dbReference type="Gene3D" id="1.20.5.340">
    <property type="match status" value="3"/>
</dbReference>
<dbReference type="Gene3D" id="1.20.5.370">
    <property type="match status" value="1"/>
</dbReference>
<dbReference type="InterPro" id="IPR002928">
    <property type="entry name" value="Myosin_tail"/>
</dbReference>
<dbReference type="InterPro" id="IPR014751">
    <property type="entry name" value="XRCC4-like_C"/>
</dbReference>
<dbReference type="PANTHER" id="PTHR46349">
    <property type="entry name" value="CINGULIN-LIKE PROTEIN 1-RELATED"/>
    <property type="match status" value="1"/>
</dbReference>
<dbReference type="PANTHER" id="PTHR46349:SF6">
    <property type="entry name" value="MYOSIN-6-LIKE"/>
    <property type="match status" value="1"/>
</dbReference>
<dbReference type="Pfam" id="PF01576">
    <property type="entry name" value="Myosin_tail_1"/>
    <property type="match status" value="1"/>
</dbReference>
<dbReference type="SUPFAM" id="SSF90257">
    <property type="entry name" value="Myosin rod fragments"/>
    <property type="match status" value="3"/>
</dbReference>
<accession>P13392</accession>
<keyword id="KW-0175">Coiled coil</keyword>
<keyword id="KW-0963">Cytoplasm</keyword>
<keyword id="KW-1015">Disulfide bond</keyword>
<keyword id="KW-0505">Motor protein</keyword>
<keyword id="KW-0514">Muscle protein</keyword>
<keyword id="KW-0518">Myosin</keyword>
<keyword id="KW-0787">Thick filament</keyword>
<organism>
    <name type="scientific">Dirofilaria immitis</name>
    <name type="common">Canine heartworm</name>
    <dbReference type="NCBI Taxonomy" id="6287"/>
    <lineage>
        <taxon>Eukaryota</taxon>
        <taxon>Metazoa</taxon>
        <taxon>Ecdysozoa</taxon>
        <taxon>Nematoda</taxon>
        <taxon>Chromadorea</taxon>
        <taxon>Rhabditida</taxon>
        <taxon>Spirurina</taxon>
        <taxon>Spiruromorpha</taxon>
        <taxon>Filarioidea</taxon>
        <taxon>Onchocercidae</taxon>
        <taxon>Dirofilaria</taxon>
    </lineage>
</organism>
<evidence type="ECO:0000250" key="1"/>
<evidence type="ECO:0000255" key="2"/>
<evidence type="ECO:0000305" key="3"/>